<comment type="function">
    <text evidence="1">Catalyzes the methylthiolation of N6-(dimethylallyl)adenosine (i(6)A), leading to the formation of 2-methylthio-N6-(dimethylallyl)adenosine (ms(2)i(6)A) at position 37 in tRNAs that read codons beginning with uridine.</text>
</comment>
<comment type="catalytic activity">
    <reaction evidence="1">
        <text>N(6)-dimethylallyladenosine(37) in tRNA + (sulfur carrier)-SH + AH2 + 2 S-adenosyl-L-methionine = 2-methylsulfanyl-N(6)-dimethylallyladenosine(37) in tRNA + (sulfur carrier)-H + 5'-deoxyadenosine + L-methionine + A + S-adenosyl-L-homocysteine + 2 H(+)</text>
        <dbReference type="Rhea" id="RHEA:37067"/>
        <dbReference type="Rhea" id="RHEA-COMP:10375"/>
        <dbReference type="Rhea" id="RHEA-COMP:10376"/>
        <dbReference type="Rhea" id="RHEA-COMP:14737"/>
        <dbReference type="Rhea" id="RHEA-COMP:14739"/>
        <dbReference type="ChEBI" id="CHEBI:13193"/>
        <dbReference type="ChEBI" id="CHEBI:15378"/>
        <dbReference type="ChEBI" id="CHEBI:17319"/>
        <dbReference type="ChEBI" id="CHEBI:17499"/>
        <dbReference type="ChEBI" id="CHEBI:29917"/>
        <dbReference type="ChEBI" id="CHEBI:57844"/>
        <dbReference type="ChEBI" id="CHEBI:57856"/>
        <dbReference type="ChEBI" id="CHEBI:59789"/>
        <dbReference type="ChEBI" id="CHEBI:64428"/>
        <dbReference type="ChEBI" id="CHEBI:74415"/>
        <dbReference type="ChEBI" id="CHEBI:74417"/>
        <dbReference type="EC" id="2.8.4.3"/>
    </reaction>
</comment>
<comment type="cofactor">
    <cofactor evidence="1">
        <name>[4Fe-4S] cluster</name>
        <dbReference type="ChEBI" id="CHEBI:49883"/>
    </cofactor>
    <text evidence="1">Binds 2 [4Fe-4S] clusters. One cluster is coordinated with 3 cysteines and an exchangeable S-adenosyl-L-methionine.</text>
</comment>
<comment type="subunit">
    <text evidence="1">Monomer.</text>
</comment>
<comment type="subcellular location">
    <subcellularLocation>
        <location evidence="1">Cytoplasm</location>
    </subcellularLocation>
</comment>
<comment type="similarity">
    <text evidence="1">Belongs to the methylthiotransferase family. MiaB subfamily.</text>
</comment>
<reference key="1">
    <citation type="journal article" date="2004" name="Mol. Plant Microbe Interact.">
        <title>The genome sequence of the Gram-positive sugarcane pathogen Leifsonia xyli subsp. xyli.</title>
        <authorList>
            <person name="Monteiro-Vitorello C.B."/>
            <person name="Camargo L.E.A."/>
            <person name="Van Sluys M.A."/>
            <person name="Kitajima J.P."/>
            <person name="Truffi D."/>
            <person name="do Amaral A.M."/>
            <person name="Harakava R."/>
            <person name="de Oliveira J.C.F."/>
            <person name="Wood D."/>
            <person name="de Oliveira M.C."/>
            <person name="Miyaki C.Y."/>
            <person name="Takita M.A."/>
            <person name="da Silva A.C.R."/>
            <person name="Furlan L.R."/>
            <person name="Carraro D.M."/>
            <person name="Camarotte G."/>
            <person name="Almeida N.F. Jr."/>
            <person name="Carrer H."/>
            <person name="Coutinho L.L."/>
            <person name="El-Dorry H.A."/>
            <person name="Ferro M.I.T."/>
            <person name="Gagliardi P.R."/>
            <person name="Giglioti E."/>
            <person name="Goldman M.H.S."/>
            <person name="Goldman G.H."/>
            <person name="Kimura E.T."/>
            <person name="Ferro E.S."/>
            <person name="Kuramae E.E."/>
            <person name="Lemos E.G.M."/>
            <person name="Lemos M.V.F."/>
            <person name="Mauro S.M.Z."/>
            <person name="Machado M.A."/>
            <person name="Marino C.L."/>
            <person name="Menck C.F."/>
            <person name="Nunes L.R."/>
            <person name="Oliveira R.C."/>
            <person name="Pereira G.G."/>
            <person name="Siqueira W."/>
            <person name="de Souza A.A."/>
            <person name="Tsai S.M."/>
            <person name="Zanca A.S."/>
            <person name="Simpson A.J.G."/>
            <person name="Brumbley S.M."/>
            <person name="Setubal J.C."/>
        </authorList>
    </citation>
    <scope>NUCLEOTIDE SEQUENCE [LARGE SCALE GENOMIC DNA]</scope>
    <source>
        <strain>CTCB07</strain>
    </source>
</reference>
<feature type="chain" id="PRO_0000374357" description="tRNA-2-methylthio-N(6)-dimethylallyladenosine synthase">
    <location>
        <begin position="1"/>
        <end position="535"/>
    </location>
</feature>
<feature type="domain" description="MTTase N-terminal" evidence="1">
    <location>
        <begin position="24"/>
        <end position="139"/>
    </location>
</feature>
<feature type="domain" description="Radical SAM core" evidence="2">
    <location>
        <begin position="162"/>
        <end position="392"/>
    </location>
</feature>
<feature type="domain" description="TRAM" evidence="1">
    <location>
        <begin position="395"/>
        <end position="465"/>
    </location>
</feature>
<feature type="region of interest" description="Disordered" evidence="3">
    <location>
        <begin position="512"/>
        <end position="535"/>
    </location>
</feature>
<feature type="binding site" evidence="1">
    <location>
        <position position="33"/>
    </location>
    <ligand>
        <name>[4Fe-4S] cluster</name>
        <dbReference type="ChEBI" id="CHEBI:49883"/>
        <label>1</label>
    </ligand>
</feature>
<feature type="binding site" evidence="1">
    <location>
        <position position="68"/>
    </location>
    <ligand>
        <name>[4Fe-4S] cluster</name>
        <dbReference type="ChEBI" id="CHEBI:49883"/>
        <label>1</label>
    </ligand>
</feature>
<feature type="binding site" evidence="1">
    <location>
        <position position="102"/>
    </location>
    <ligand>
        <name>[4Fe-4S] cluster</name>
        <dbReference type="ChEBI" id="CHEBI:49883"/>
        <label>1</label>
    </ligand>
</feature>
<feature type="binding site" evidence="1">
    <location>
        <position position="176"/>
    </location>
    <ligand>
        <name>[4Fe-4S] cluster</name>
        <dbReference type="ChEBI" id="CHEBI:49883"/>
        <label>2</label>
        <note>4Fe-4S-S-AdoMet</note>
    </ligand>
</feature>
<feature type="binding site" evidence="1">
    <location>
        <position position="180"/>
    </location>
    <ligand>
        <name>[4Fe-4S] cluster</name>
        <dbReference type="ChEBI" id="CHEBI:49883"/>
        <label>2</label>
        <note>4Fe-4S-S-AdoMet</note>
    </ligand>
</feature>
<feature type="binding site" evidence="1">
    <location>
        <position position="183"/>
    </location>
    <ligand>
        <name>[4Fe-4S] cluster</name>
        <dbReference type="ChEBI" id="CHEBI:49883"/>
        <label>2</label>
        <note>4Fe-4S-S-AdoMet</note>
    </ligand>
</feature>
<accession>Q6AE03</accession>
<organism>
    <name type="scientific">Leifsonia xyli subsp. xyli (strain CTCB07)</name>
    <dbReference type="NCBI Taxonomy" id="281090"/>
    <lineage>
        <taxon>Bacteria</taxon>
        <taxon>Bacillati</taxon>
        <taxon>Actinomycetota</taxon>
        <taxon>Actinomycetes</taxon>
        <taxon>Micrococcales</taxon>
        <taxon>Microbacteriaceae</taxon>
        <taxon>Leifsonia</taxon>
    </lineage>
</organism>
<evidence type="ECO:0000255" key="1">
    <source>
        <dbReference type="HAMAP-Rule" id="MF_01864"/>
    </source>
</evidence>
<evidence type="ECO:0000255" key="2">
    <source>
        <dbReference type="PROSITE-ProRule" id="PRU01266"/>
    </source>
</evidence>
<evidence type="ECO:0000256" key="3">
    <source>
        <dbReference type="SAM" id="MobiDB-lite"/>
    </source>
</evidence>
<keyword id="KW-0004">4Fe-4S</keyword>
<keyword id="KW-0963">Cytoplasm</keyword>
<keyword id="KW-0408">Iron</keyword>
<keyword id="KW-0411">Iron-sulfur</keyword>
<keyword id="KW-0479">Metal-binding</keyword>
<keyword id="KW-1185">Reference proteome</keyword>
<keyword id="KW-0949">S-adenosyl-L-methionine</keyword>
<keyword id="KW-0808">Transferase</keyword>
<keyword id="KW-0819">tRNA processing</keyword>
<protein>
    <recommendedName>
        <fullName evidence="1">tRNA-2-methylthio-N(6)-dimethylallyladenosine synthase</fullName>
        <ecNumber evidence="1">2.8.4.3</ecNumber>
    </recommendedName>
    <alternativeName>
        <fullName evidence="1">(Dimethylallyl)adenosine tRNA methylthiotransferase MiaB</fullName>
    </alternativeName>
    <alternativeName>
        <fullName evidence="1">tRNA-i(6)A37 methylthiotransferase</fullName>
    </alternativeName>
</protein>
<sequence>MSIIDHHSVVPRSEAAVGEDGRARTYEVRTFGCQMNVHDSERLSGSLEAAGYVPANGEEADIVVINTCAVRENADNKLYGNLGHLASVKRRHAGMQIAVGGCLAQKDKNVILEKAPWVDVVFGTHNMGALPRLLERARHNDAAEIEILEALETFPSTLPTKRDSSFSGWVSISVGCNNTCTFCIVPALRGKEKDRRPGDILAEVQALVDEGAVEVTLLGQNVNSYGVEFGDRQAFSKLLRAAGQIEGLERIRFTSPHPAAFTEDVIDAMAETPNVMPQLHMPLQSGSDRILRSMRRSYRSEKFLGILDRVRAKLPGAAISTDIIVGFPGETEEDFLDTLRVVEAARFASAFTFQYSIRPGTPAATMAGQVPKEVVQERYDRLIALQERISLEENEKLIGRDVELLVATGEGRKDADTRRLSGRARDSRLVHFELPAGSEVPRPGDVALVRVTQAAPHYLIADAAGGPLRVRRTRAGDAWDRAEAESCAAPSLSGGRAAAAVGRVSLGLPTLRTREPLTSPGVGTMPLYDPTDGQR</sequence>
<proteinExistence type="inferred from homology"/>
<name>MIAB_LEIXX</name>
<dbReference type="EC" id="2.8.4.3" evidence="1"/>
<dbReference type="EMBL" id="AE016822">
    <property type="protein sequence ID" value="AAT89393.1"/>
    <property type="molecule type" value="Genomic_DNA"/>
</dbReference>
<dbReference type="RefSeq" id="WP_011186382.1">
    <property type="nucleotide sequence ID" value="NC_006087.1"/>
</dbReference>
<dbReference type="SMR" id="Q6AE03"/>
<dbReference type="STRING" id="281090.Lxx15990"/>
<dbReference type="KEGG" id="lxx:Lxx15990"/>
<dbReference type="eggNOG" id="COG0621">
    <property type="taxonomic scope" value="Bacteria"/>
</dbReference>
<dbReference type="HOGENOM" id="CLU_018697_2_2_11"/>
<dbReference type="Proteomes" id="UP000001306">
    <property type="component" value="Chromosome"/>
</dbReference>
<dbReference type="GO" id="GO:0005829">
    <property type="term" value="C:cytosol"/>
    <property type="evidence" value="ECO:0007669"/>
    <property type="project" value="TreeGrafter"/>
</dbReference>
<dbReference type="GO" id="GO:0051539">
    <property type="term" value="F:4 iron, 4 sulfur cluster binding"/>
    <property type="evidence" value="ECO:0007669"/>
    <property type="project" value="UniProtKB-UniRule"/>
</dbReference>
<dbReference type="GO" id="GO:0046872">
    <property type="term" value="F:metal ion binding"/>
    <property type="evidence" value="ECO:0007669"/>
    <property type="project" value="UniProtKB-KW"/>
</dbReference>
<dbReference type="GO" id="GO:0035597">
    <property type="term" value="F:N6-isopentenyladenosine methylthiotransferase activity"/>
    <property type="evidence" value="ECO:0007669"/>
    <property type="project" value="TreeGrafter"/>
</dbReference>
<dbReference type="CDD" id="cd01335">
    <property type="entry name" value="Radical_SAM"/>
    <property type="match status" value="1"/>
</dbReference>
<dbReference type="FunFam" id="3.40.50.12160:FF:000003">
    <property type="entry name" value="CDK5 regulatory subunit-associated protein 1"/>
    <property type="match status" value="1"/>
</dbReference>
<dbReference type="FunFam" id="3.80.30.20:FF:000001">
    <property type="entry name" value="tRNA-2-methylthio-N(6)-dimethylallyladenosine synthase 2"/>
    <property type="match status" value="1"/>
</dbReference>
<dbReference type="Gene3D" id="3.40.50.12160">
    <property type="entry name" value="Methylthiotransferase, N-terminal domain"/>
    <property type="match status" value="1"/>
</dbReference>
<dbReference type="Gene3D" id="3.80.30.20">
    <property type="entry name" value="tm_1862 like domain"/>
    <property type="match status" value="1"/>
</dbReference>
<dbReference type="HAMAP" id="MF_01864">
    <property type="entry name" value="tRNA_metthiotr_MiaB"/>
    <property type="match status" value="1"/>
</dbReference>
<dbReference type="InterPro" id="IPR006638">
    <property type="entry name" value="Elp3/MiaA/NifB-like_rSAM"/>
</dbReference>
<dbReference type="InterPro" id="IPR005839">
    <property type="entry name" value="Methylthiotransferase"/>
</dbReference>
<dbReference type="InterPro" id="IPR020612">
    <property type="entry name" value="Methylthiotransferase_CS"/>
</dbReference>
<dbReference type="InterPro" id="IPR013848">
    <property type="entry name" value="Methylthiotransferase_N"/>
</dbReference>
<dbReference type="InterPro" id="IPR038135">
    <property type="entry name" value="Methylthiotransferase_N_sf"/>
</dbReference>
<dbReference type="InterPro" id="IPR006463">
    <property type="entry name" value="MiaB_methiolase"/>
</dbReference>
<dbReference type="InterPro" id="IPR007197">
    <property type="entry name" value="rSAM"/>
</dbReference>
<dbReference type="InterPro" id="IPR023404">
    <property type="entry name" value="rSAM_horseshoe"/>
</dbReference>
<dbReference type="InterPro" id="IPR002792">
    <property type="entry name" value="TRAM_dom"/>
</dbReference>
<dbReference type="NCBIfam" id="TIGR01574">
    <property type="entry name" value="miaB-methiolase"/>
    <property type="match status" value="1"/>
</dbReference>
<dbReference type="NCBIfam" id="TIGR00089">
    <property type="entry name" value="MiaB/RimO family radical SAM methylthiotransferase"/>
    <property type="match status" value="1"/>
</dbReference>
<dbReference type="PANTHER" id="PTHR43020">
    <property type="entry name" value="CDK5 REGULATORY SUBUNIT-ASSOCIATED PROTEIN 1"/>
    <property type="match status" value="1"/>
</dbReference>
<dbReference type="PANTHER" id="PTHR43020:SF2">
    <property type="entry name" value="MITOCHONDRIAL TRNA METHYLTHIOTRANSFERASE CDK5RAP1"/>
    <property type="match status" value="1"/>
</dbReference>
<dbReference type="Pfam" id="PF04055">
    <property type="entry name" value="Radical_SAM"/>
    <property type="match status" value="1"/>
</dbReference>
<dbReference type="Pfam" id="PF00919">
    <property type="entry name" value="UPF0004"/>
    <property type="match status" value="1"/>
</dbReference>
<dbReference type="SFLD" id="SFLDF00273">
    <property type="entry name" value="(dimethylallyl)adenosine_tRNA"/>
    <property type="match status" value="1"/>
</dbReference>
<dbReference type="SFLD" id="SFLDG01082">
    <property type="entry name" value="B12-binding_domain_containing"/>
    <property type="match status" value="1"/>
</dbReference>
<dbReference type="SFLD" id="SFLDS00029">
    <property type="entry name" value="Radical_SAM"/>
    <property type="match status" value="1"/>
</dbReference>
<dbReference type="SMART" id="SM00729">
    <property type="entry name" value="Elp3"/>
    <property type="match status" value="1"/>
</dbReference>
<dbReference type="SUPFAM" id="SSF102114">
    <property type="entry name" value="Radical SAM enzymes"/>
    <property type="match status" value="1"/>
</dbReference>
<dbReference type="PROSITE" id="PS51449">
    <property type="entry name" value="MTTASE_N"/>
    <property type="match status" value="1"/>
</dbReference>
<dbReference type="PROSITE" id="PS01278">
    <property type="entry name" value="MTTASE_RADICAL"/>
    <property type="match status" value="1"/>
</dbReference>
<dbReference type="PROSITE" id="PS51918">
    <property type="entry name" value="RADICAL_SAM"/>
    <property type="match status" value="1"/>
</dbReference>
<dbReference type="PROSITE" id="PS50926">
    <property type="entry name" value="TRAM"/>
    <property type="match status" value="1"/>
</dbReference>
<gene>
    <name evidence="1" type="primary">miaB</name>
    <name type="ordered locus">Lxx15990</name>
</gene>